<proteinExistence type="inferred from homology"/>
<name>ODPB_STAAC</name>
<dbReference type="EC" id="1.2.4.1"/>
<dbReference type="EMBL" id="CP000046">
    <property type="protein sequence ID" value="AAW37983.1"/>
    <property type="molecule type" value="Genomic_DNA"/>
</dbReference>
<dbReference type="RefSeq" id="WP_000068171.1">
    <property type="nucleotide sequence ID" value="NC_002951.2"/>
</dbReference>
<dbReference type="SMR" id="Q5HGZ0"/>
<dbReference type="KEGG" id="sac:SACOL1103"/>
<dbReference type="HOGENOM" id="CLU_012907_1_0_9"/>
<dbReference type="Proteomes" id="UP000000530">
    <property type="component" value="Chromosome"/>
</dbReference>
<dbReference type="GO" id="GO:0004739">
    <property type="term" value="F:pyruvate dehydrogenase (acetyl-transferring) activity"/>
    <property type="evidence" value="ECO:0007669"/>
    <property type="project" value="UniProtKB-EC"/>
</dbReference>
<dbReference type="CDD" id="cd07036">
    <property type="entry name" value="TPP_PYR_E1-PDHc-beta_like"/>
    <property type="match status" value="1"/>
</dbReference>
<dbReference type="FunFam" id="3.40.50.920:FF:000001">
    <property type="entry name" value="Pyruvate dehydrogenase E1 beta subunit"/>
    <property type="match status" value="1"/>
</dbReference>
<dbReference type="FunFam" id="3.40.50.970:FF:000001">
    <property type="entry name" value="Pyruvate dehydrogenase E1 beta subunit"/>
    <property type="match status" value="1"/>
</dbReference>
<dbReference type="Gene3D" id="3.40.50.920">
    <property type="match status" value="1"/>
</dbReference>
<dbReference type="Gene3D" id="3.40.50.970">
    <property type="match status" value="1"/>
</dbReference>
<dbReference type="InterPro" id="IPR029061">
    <property type="entry name" value="THDP-binding"/>
</dbReference>
<dbReference type="InterPro" id="IPR009014">
    <property type="entry name" value="Transketo_C/PFOR_II"/>
</dbReference>
<dbReference type="InterPro" id="IPR005475">
    <property type="entry name" value="Transketolase-like_Pyr-bd"/>
</dbReference>
<dbReference type="InterPro" id="IPR033248">
    <property type="entry name" value="Transketolase_C"/>
</dbReference>
<dbReference type="PANTHER" id="PTHR43257">
    <property type="entry name" value="PYRUVATE DEHYDROGENASE E1 COMPONENT BETA SUBUNIT"/>
    <property type="match status" value="1"/>
</dbReference>
<dbReference type="PANTHER" id="PTHR43257:SF2">
    <property type="entry name" value="PYRUVATE DEHYDROGENASE E1 COMPONENT SUBUNIT BETA"/>
    <property type="match status" value="1"/>
</dbReference>
<dbReference type="Pfam" id="PF02779">
    <property type="entry name" value="Transket_pyr"/>
    <property type="match status" value="1"/>
</dbReference>
<dbReference type="Pfam" id="PF02780">
    <property type="entry name" value="Transketolase_C"/>
    <property type="match status" value="1"/>
</dbReference>
<dbReference type="SMART" id="SM00861">
    <property type="entry name" value="Transket_pyr"/>
    <property type="match status" value="1"/>
</dbReference>
<dbReference type="SUPFAM" id="SSF52518">
    <property type="entry name" value="Thiamin diphosphate-binding fold (THDP-binding)"/>
    <property type="match status" value="1"/>
</dbReference>
<dbReference type="SUPFAM" id="SSF52922">
    <property type="entry name" value="TK C-terminal domain-like"/>
    <property type="match status" value="1"/>
</dbReference>
<evidence type="ECO:0000250" key="1"/>
<feature type="chain" id="PRO_0000162228" description="Pyruvate dehydrogenase E1 component subunit beta">
    <location>
        <begin position="1"/>
        <end position="325"/>
    </location>
</feature>
<feature type="binding site" evidence="1">
    <location>
        <position position="60"/>
    </location>
    <ligand>
        <name>thiamine diphosphate</name>
        <dbReference type="ChEBI" id="CHEBI:58937"/>
    </ligand>
</feature>
<gene>
    <name type="primary">pdhB</name>
    <name type="ordered locus">SACOL1103</name>
</gene>
<reference key="1">
    <citation type="journal article" date="2005" name="J. Bacteriol.">
        <title>Insights on evolution of virulence and resistance from the complete genome analysis of an early methicillin-resistant Staphylococcus aureus strain and a biofilm-producing methicillin-resistant Staphylococcus epidermidis strain.</title>
        <authorList>
            <person name="Gill S.R."/>
            <person name="Fouts D.E."/>
            <person name="Archer G.L."/>
            <person name="Mongodin E.F."/>
            <person name="DeBoy R.T."/>
            <person name="Ravel J."/>
            <person name="Paulsen I.T."/>
            <person name="Kolonay J.F."/>
            <person name="Brinkac L.M."/>
            <person name="Beanan M.J."/>
            <person name="Dodson R.J."/>
            <person name="Daugherty S.C."/>
            <person name="Madupu R."/>
            <person name="Angiuoli S.V."/>
            <person name="Durkin A.S."/>
            <person name="Haft D.H."/>
            <person name="Vamathevan J.J."/>
            <person name="Khouri H."/>
            <person name="Utterback T.R."/>
            <person name="Lee C."/>
            <person name="Dimitrov G."/>
            <person name="Jiang L."/>
            <person name="Qin H."/>
            <person name="Weidman J."/>
            <person name="Tran K."/>
            <person name="Kang K.H."/>
            <person name="Hance I.R."/>
            <person name="Nelson K.E."/>
            <person name="Fraser C.M."/>
        </authorList>
    </citation>
    <scope>NUCLEOTIDE SEQUENCE [LARGE SCALE GENOMIC DNA]</scope>
    <source>
        <strain>COL</strain>
    </source>
</reference>
<protein>
    <recommendedName>
        <fullName>Pyruvate dehydrogenase E1 component subunit beta</fullName>
        <ecNumber>1.2.4.1</ecNumber>
    </recommendedName>
</protein>
<keyword id="KW-0560">Oxidoreductase</keyword>
<keyword id="KW-0670">Pyruvate</keyword>
<keyword id="KW-0786">Thiamine pyrophosphate</keyword>
<sequence>MAQMTMVQAINDALKTELKNDQDVLIFGEDVGVNGGVFRVTEGLQKEFGEDRVFDTPLAESGIGGLAMGLAVEGFRPVMEVQFLGFVFEVFDAIAGQIARTRFRSGGTKTAPVTIRGPFGGGVHTPELHADNLEGILAQSPGLKVVIPSGPYDAKGLLISSIRSNDPVVYLEHMKLYRSFREEVPEEEYTIDIGKANVKKEGNDISIITYGAMVQESMKAAEELEKDGYSVEVIDLRTVQPIDVDTIVASVEKTGRAVVVQEAQRQAGVGAAVVAELSERAILSLEAPIGRVAAADTIYPFTQAENVWLPNKNDIIEKAKETLEF</sequence>
<organism>
    <name type="scientific">Staphylococcus aureus (strain COL)</name>
    <dbReference type="NCBI Taxonomy" id="93062"/>
    <lineage>
        <taxon>Bacteria</taxon>
        <taxon>Bacillati</taxon>
        <taxon>Bacillota</taxon>
        <taxon>Bacilli</taxon>
        <taxon>Bacillales</taxon>
        <taxon>Staphylococcaceae</taxon>
        <taxon>Staphylococcus</taxon>
    </lineage>
</organism>
<comment type="function">
    <text evidence="1">The pyruvate dehydrogenase complex catalyzes the overall conversion of pyruvate to acetyl-CoA and CO(2). It contains multiple copies of three enzymatic components: pyruvate dehydrogenase (E1), dihydrolipoamide acetyltransferase (E2) and lipoamide dehydrogenase (E3) (By similarity).</text>
</comment>
<comment type="catalytic activity">
    <reaction>
        <text>N(6)-[(R)-lipoyl]-L-lysyl-[protein] + pyruvate + H(+) = N(6)-[(R)-S(8)-acetyldihydrolipoyl]-L-lysyl-[protein] + CO2</text>
        <dbReference type="Rhea" id="RHEA:19189"/>
        <dbReference type="Rhea" id="RHEA-COMP:10474"/>
        <dbReference type="Rhea" id="RHEA-COMP:10478"/>
        <dbReference type="ChEBI" id="CHEBI:15361"/>
        <dbReference type="ChEBI" id="CHEBI:15378"/>
        <dbReference type="ChEBI" id="CHEBI:16526"/>
        <dbReference type="ChEBI" id="CHEBI:83099"/>
        <dbReference type="ChEBI" id="CHEBI:83111"/>
        <dbReference type="EC" id="1.2.4.1"/>
    </reaction>
</comment>
<comment type="cofactor">
    <cofactor evidence="1">
        <name>thiamine diphosphate</name>
        <dbReference type="ChEBI" id="CHEBI:58937"/>
    </cofactor>
</comment>
<comment type="subunit">
    <text>Heterodimer of an alpha and a beta chain.</text>
</comment>
<accession>Q5HGZ0</accession>